<comment type="function">
    <text evidence="1">Located on the platform of the 30S subunit, it bridges several disparate RNA helices of the 16S rRNA. Forms part of the Shine-Dalgarno cleft in the 70S ribosome.</text>
</comment>
<comment type="subunit">
    <text evidence="1">Part of the 30S ribosomal subunit. Interacts with proteins S7 and S18. Binds to IF-3.</text>
</comment>
<comment type="similarity">
    <text evidence="1">Belongs to the universal ribosomal protein uS11 family.</text>
</comment>
<reference key="1">
    <citation type="journal article" date="2005" name="J. Bacteriol.">
        <title>Swine and poultry pathogens: the complete genome sequences of two strains of Mycoplasma hyopneumoniae and a strain of Mycoplasma synoviae.</title>
        <authorList>
            <person name="Vasconcelos A.T.R."/>
            <person name="Ferreira H.B."/>
            <person name="Bizarro C.V."/>
            <person name="Bonatto S.L."/>
            <person name="Carvalho M.O."/>
            <person name="Pinto P.M."/>
            <person name="Almeida D.F."/>
            <person name="Almeida L.G.P."/>
            <person name="Almeida R."/>
            <person name="Alves-Junior L."/>
            <person name="Assuncao E.N."/>
            <person name="Azevedo V.A.C."/>
            <person name="Bogo M.R."/>
            <person name="Brigido M.M."/>
            <person name="Brocchi M."/>
            <person name="Burity H.A."/>
            <person name="Camargo A.A."/>
            <person name="Camargo S.S."/>
            <person name="Carepo M.S."/>
            <person name="Carraro D.M."/>
            <person name="de Mattos Cascardo J.C."/>
            <person name="Castro L.A."/>
            <person name="Cavalcanti G."/>
            <person name="Chemale G."/>
            <person name="Collevatti R.G."/>
            <person name="Cunha C.W."/>
            <person name="Dallagiovanna B."/>
            <person name="Dambros B.P."/>
            <person name="Dellagostin O.A."/>
            <person name="Falcao C."/>
            <person name="Fantinatti-Garboggini F."/>
            <person name="Felipe M.S.S."/>
            <person name="Fiorentin L."/>
            <person name="Franco G.R."/>
            <person name="Freitas N.S.A."/>
            <person name="Frias D."/>
            <person name="Grangeiro T.B."/>
            <person name="Grisard E.C."/>
            <person name="Guimaraes C.T."/>
            <person name="Hungria M."/>
            <person name="Jardim S.N."/>
            <person name="Krieger M.A."/>
            <person name="Laurino J.P."/>
            <person name="Lima L.F.A."/>
            <person name="Lopes M.I."/>
            <person name="Loreto E.L.S."/>
            <person name="Madeira H.M.F."/>
            <person name="Manfio G.P."/>
            <person name="Maranhao A.Q."/>
            <person name="Martinkovics C.T."/>
            <person name="Medeiros S.R.B."/>
            <person name="Moreira M.A.M."/>
            <person name="Neiva M."/>
            <person name="Ramalho-Neto C.E."/>
            <person name="Nicolas M.F."/>
            <person name="Oliveira S.C."/>
            <person name="Paixao R.F.C."/>
            <person name="Pedrosa F.O."/>
            <person name="Pena S.D.J."/>
            <person name="Pereira M."/>
            <person name="Pereira-Ferrari L."/>
            <person name="Piffer I."/>
            <person name="Pinto L.S."/>
            <person name="Potrich D.P."/>
            <person name="Salim A.C.M."/>
            <person name="Santos F.R."/>
            <person name="Schmitt R."/>
            <person name="Schneider M.P.C."/>
            <person name="Schrank A."/>
            <person name="Schrank I.S."/>
            <person name="Schuck A.F."/>
            <person name="Seuanez H.N."/>
            <person name="Silva D.W."/>
            <person name="Silva R."/>
            <person name="Silva S.C."/>
            <person name="Soares C.M.A."/>
            <person name="Souza K.R.L."/>
            <person name="Souza R.C."/>
            <person name="Staats C.C."/>
            <person name="Steffens M.B.R."/>
            <person name="Teixeira S.M.R."/>
            <person name="Urmenyi T.P."/>
            <person name="Vainstein M.H."/>
            <person name="Zuccherato L.W."/>
            <person name="Simpson A.J.G."/>
            <person name="Zaha A."/>
        </authorList>
    </citation>
    <scope>NUCLEOTIDE SEQUENCE [LARGE SCALE GENOMIC DNA]</scope>
    <source>
        <strain>J / ATCC 25934 / NCTC 10110</strain>
    </source>
</reference>
<sequence length="134" mass="14619">MATNVKKVKKLRPKNVTVGIAHIHSSHQNTIISFTDKQGNVISWASSGSVGFKGTKKKTAYAATLATAAAAQKAREHGIREVIVELKGTGQGKEAARKQIITSGLNILLTKDVTPVPHNGTRPPRKWFKRQEKR</sequence>
<keyword id="KW-0687">Ribonucleoprotein</keyword>
<keyword id="KW-0689">Ribosomal protein</keyword>
<keyword id="KW-0694">RNA-binding</keyword>
<keyword id="KW-0699">rRNA-binding</keyword>
<evidence type="ECO:0000255" key="1">
    <source>
        <dbReference type="HAMAP-Rule" id="MF_01310"/>
    </source>
</evidence>
<evidence type="ECO:0000256" key="2">
    <source>
        <dbReference type="SAM" id="MobiDB-lite"/>
    </source>
</evidence>
<evidence type="ECO:0000305" key="3"/>
<name>RS11_MESHJ</name>
<organism>
    <name type="scientific">Mesomycoplasma hyopneumoniae (strain J / ATCC 25934 / NCTC 10110)</name>
    <name type="common">Mycoplasma hyopneumoniae</name>
    <dbReference type="NCBI Taxonomy" id="262719"/>
    <lineage>
        <taxon>Bacteria</taxon>
        <taxon>Bacillati</taxon>
        <taxon>Mycoplasmatota</taxon>
        <taxon>Mycoplasmoidales</taxon>
        <taxon>Metamycoplasmataceae</taxon>
        <taxon>Mesomycoplasma</taxon>
    </lineage>
</organism>
<gene>
    <name evidence="1" type="primary">rpsK</name>
    <name type="ordered locus">MHJ_0165</name>
</gene>
<proteinExistence type="inferred from homology"/>
<accession>Q4AAG5</accession>
<protein>
    <recommendedName>
        <fullName evidence="1">Small ribosomal subunit protein uS11</fullName>
    </recommendedName>
    <alternativeName>
        <fullName evidence="3">30S ribosomal protein S11</fullName>
    </alternativeName>
</protein>
<feature type="chain" id="PRO_0000294804" description="Small ribosomal subunit protein uS11">
    <location>
        <begin position="1"/>
        <end position="134"/>
    </location>
</feature>
<feature type="region of interest" description="Disordered" evidence="2">
    <location>
        <begin position="114"/>
        <end position="134"/>
    </location>
</feature>
<feature type="compositionally biased region" description="Basic residues" evidence="2">
    <location>
        <begin position="123"/>
        <end position="134"/>
    </location>
</feature>
<dbReference type="EMBL" id="AE017243">
    <property type="protein sequence ID" value="AAZ44256.1"/>
    <property type="molecule type" value="Genomic_DNA"/>
</dbReference>
<dbReference type="RefSeq" id="WP_011283962.1">
    <property type="nucleotide sequence ID" value="NC_007295.1"/>
</dbReference>
<dbReference type="SMR" id="Q4AAG5"/>
<dbReference type="GeneID" id="41334468"/>
<dbReference type="KEGG" id="mhj:MHJ_0165"/>
<dbReference type="eggNOG" id="COG0100">
    <property type="taxonomic scope" value="Bacteria"/>
</dbReference>
<dbReference type="HOGENOM" id="CLU_072439_5_0_14"/>
<dbReference type="OrthoDB" id="9806415at2"/>
<dbReference type="Proteomes" id="UP000000548">
    <property type="component" value="Chromosome"/>
</dbReference>
<dbReference type="GO" id="GO:1990904">
    <property type="term" value="C:ribonucleoprotein complex"/>
    <property type="evidence" value="ECO:0007669"/>
    <property type="project" value="UniProtKB-KW"/>
</dbReference>
<dbReference type="GO" id="GO:0005840">
    <property type="term" value="C:ribosome"/>
    <property type="evidence" value="ECO:0007669"/>
    <property type="project" value="UniProtKB-KW"/>
</dbReference>
<dbReference type="GO" id="GO:0019843">
    <property type="term" value="F:rRNA binding"/>
    <property type="evidence" value="ECO:0007669"/>
    <property type="project" value="UniProtKB-UniRule"/>
</dbReference>
<dbReference type="GO" id="GO:0003735">
    <property type="term" value="F:structural constituent of ribosome"/>
    <property type="evidence" value="ECO:0007669"/>
    <property type="project" value="InterPro"/>
</dbReference>
<dbReference type="GO" id="GO:0006412">
    <property type="term" value="P:translation"/>
    <property type="evidence" value="ECO:0007669"/>
    <property type="project" value="UniProtKB-UniRule"/>
</dbReference>
<dbReference type="Gene3D" id="3.30.420.80">
    <property type="entry name" value="Ribosomal protein S11"/>
    <property type="match status" value="1"/>
</dbReference>
<dbReference type="HAMAP" id="MF_01310">
    <property type="entry name" value="Ribosomal_uS11"/>
    <property type="match status" value="1"/>
</dbReference>
<dbReference type="InterPro" id="IPR001971">
    <property type="entry name" value="Ribosomal_uS11"/>
</dbReference>
<dbReference type="InterPro" id="IPR019981">
    <property type="entry name" value="Ribosomal_uS11_bac-type"/>
</dbReference>
<dbReference type="InterPro" id="IPR018102">
    <property type="entry name" value="Ribosomal_uS11_CS"/>
</dbReference>
<dbReference type="InterPro" id="IPR036967">
    <property type="entry name" value="Ribosomal_uS11_sf"/>
</dbReference>
<dbReference type="NCBIfam" id="NF003698">
    <property type="entry name" value="PRK05309.1"/>
    <property type="match status" value="1"/>
</dbReference>
<dbReference type="NCBIfam" id="TIGR03632">
    <property type="entry name" value="uS11_bact"/>
    <property type="match status" value="1"/>
</dbReference>
<dbReference type="PANTHER" id="PTHR11759">
    <property type="entry name" value="40S RIBOSOMAL PROTEIN S14/30S RIBOSOMAL PROTEIN S11"/>
    <property type="match status" value="1"/>
</dbReference>
<dbReference type="Pfam" id="PF00411">
    <property type="entry name" value="Ribosomal_S11"/>
    <property type="match status" value="1"/>
</dbReference>
<dbReference type="PIRSF" id="PIRSF002131">
    <property type="entry name" value="Ribosomal_S11"/>
    <property type="match status" value="1"/>
</dbReference>
<dbReference type="SUPFAM" id="SSF53137">
    <property type="entry name" value="Translational machinery components"/>
    <property type="match status" value="1"/>
</dbReference>
<dbReference type="PROSITE" id="PS00054">
    <property type="entry name" value="RIBOSOMAL_S11"/>
    <property type="match status" value="1"/>
</dbReference>